<proteinExistence type="evidence at protein level"/>
<name>RFS1_CAEEL</name>
<protein>
    <recommendedName>
        <fullName>RAD51-like protein 1</fullName>
    </recommendedName>
</protein>
<accession>P34348</accession>
<reference key="1">
    <citation type="journal article" date="1994" name="Nature">
        <title>2.2 Mb of contiguous nucleotide sequence from chromosome III of C. elegans.</title>
        <authorList>
            <person name="Wilson R."/>
            <person name="Ainscough R."/>
            <person name="Anderson K."/>
            <person name="Baynes C."/>
            <person name="Berks M."/>
            <person name="Bonfield J."/>
            <person name="Burton J."/>
            <person name="Connell M."/>
            <person name="Copsey T."/>
            <person name="Cooper J."/>
            <person name="Coulson A."/>
            <person name="Craxton M."/>
            <person name="Dear S."/>
            <person name="Du Z."/>
            <person name="Durbin R."/>
            <person name="Favello A."/>
            <person name="Fraser A."/>
            <person name="Fulton L."/>
            <person name="Gardner A."/>
            <person name="Green P."/>
            <person name="Hawkins T."/>
            <person name="Hillier L."/>
            <person name="Jier M."/>
            <person name="Johnston L."/>
            <person name="Jones M."/>
            <person name="Kershaw J."/>
            <person name="Kirsten J."/>
            <person name="Laisster N."/>
            <person name="Latreille P."/>
            <person name="Lightning J."/>
            <person name="Lloyd C."/>
            <person name="Mortimore B."/>
            <person name="O'Callaghan M."/>
            <person name="Parsons J."/>
            <person name="Percy C."/>
            <person name="Rifken L."/>
            <person name="Roopra A."/>
            <person name="Saunders D."/>
            <person name="Shownkeen R."/>
            <person name="Sims M."/>
            <person name="Smaldon N."/>
            <person name="Smith A."/>
            <person name="Smith M."/>
            <person name="Sonnhammer E."/>
            <person name="Staden R."/>
            <person name="Sulston J."/>
            <person name="Thierry-Mieg J."/>
            <person name="Thomas K."/>
            <person name="Vaudin M."/>
            <person name="Vaughan K."/>
            <person name="Waterston R."/>
            <person name="Watson A."/>
            <person name="Weinstock L."/>
            <person name="Wilkinson-Sproat J."/>
            <person name="Wohldman P."/>
        </authorList>
    </citation>
    <scope>NUCLEOTIDE SEQUENCE [LARGE SCALE GENOMIC DNA]</scope>
    <source>
        <strain>Bristol N2</strain>
    </source>
</reference>
<reference key="2">
    <citation type="journal article" date="1998" name="Science">
        <title>Genome sequence of the nematode C. elegans: a platform for investigating biology.</title>
        <authorList>
            <consortium name="The C. elegans sequencing consortium"/>
        </authorList>
    </citation>
    <scope>NUCLEOTIDE SEQUENCE [LARGE SCALE GENOMIC DNA]</scope>
    <source>
        <strain>Bristol N2</strain>
    </source>
</reference>
<reference key="3">
    <citation type="journal article" date="2002" name="Science">
        <title>Combined functional genomic maps of the C. elegans DNA damage response.</title>
        <authorList>
            <person name="Boulton S.J."/>
            <person name="Gartner A."/>
            <person name="Reboul J."/>
            <person name="Vaglio P."/>
            <person name="Dyson N."/>
            <person name="Hill D.E."/>
            <person name="Vidal M."/>
        </authorList>
    </citation>
    <scope>INTERACTION WITH RAD-51</scope>
</reference>
<reference key="4">
    <citation type="journal article" date="2005" name="Mol. Cell. Biol.">
        <title>RAD-51-dependent and -independent roles of a Caenorhabditis elegans BRCA2-related protein during DNA double-strand break repair.</title>
        <authorList>
            <person name="Martin J.S."/>
            <person name="Winkelmann N."/>
            <person name="Petalcorin M.I."/>
            <person name="McIlwraith M.J."/>
            <person name="Boulton S.J."/>
        </authorList>
    </citation>
    <scope>INTERACTION WITH BRC-2</scope>
</reference>
<reference key="5">
    <citation type="journal article" date="2007" name="EMBO J.">
        <title>Replication blocking lesions present a unique substrate for homologous recombination.</title>
        <authorList>
            <person name="Ward J.D."/>
            <person name="Barber L.J."/>
            <person name="Petalcorin M.I."/>
            <person name="Yanowitz J."/>
            <person name="Boulton S.J."/>
        </authorList>
    </citation>
    <scope>FUNCTION</scope>
</reference>
<gene>
    <name type="primary">rfs-1</name>
    <name type="ORF">C30A5.2</name>
</gene>
<comment type="function">
    <text evidence="3">Has a role in the homologous recombination repair (HRR) of genomic DNA during meiosis. Required for rad-51 recruitment onto ssDNA gaps generated at stalled replication fork barriers.</text>
</comment>
<comment type="subunit">
    <text evidence="1 2">Interacts with brc-2 and rad-51.</text>
</comment>
<comment type="interaction">
    <interactant intactId="EBI-330791">
        <id>P34348</id>
    </interactant>
    <interactant intactId="EBI-321895">
        <id>Q95Q25</id>
        <label>rad-51</label>
    </interactant>
    <organismsDiffer>false</organismsDiffer>
    <experiments>3</experiments>
</comment>
<comment type="interaction">
    <interactant intactId="EBI-330791">
        <id>P34348</id>
    </interactant>
    <interactant intactId="EBI-332336">
        <id>Q21621</id>
        <label>rip-1</label>
    </interactant>
    <organismsDiffer>false</organismsDiffer>
    <experiments>4</experiments>
</comment>
<comment type="subcellular location">
    <subcellularLocation>
        <location evidence="4">Nucleus</location>
    </subcellularLocation>
</comment>
<sequence length="245" mass="28104">MDPSENVFKYETAYDLLVRLGAERLFLRTCLSILDPVLELHPGKCYEIDGDLGVGKTQICYSFAAKFLQTKKTAKMGWIGATPLRTDHLLLHIEHFGNQTNEDILDRIVCKRVEKIAELQDSLTRFLDTINLQLVIVENIDAILHDTVYHKEMGRSMQSDVVERIRKLTKLEITVILTNHITHWRGYPAPALGAFWSSQINNRFFIEKRNDDSDIRIVSAMKGEQDDGMNRIEFKIGDRGLKAVE</sequence>
<feature type="chain" id="PRO_0000065204" description="RAD51-like protein 1">
    <location>
        <begin position="1"/>
        <end position="245"/>
    </location>
</feature>
<evidence type="ECO:0000269" key="1">
    <source>
    </source>
</evidence>
<evidence type="ECO:0000269" key="2">
    <source>
    </source>
</evidence>
<evidence type="ECO:0000269" key="3">
    <source>
    </source>
</evidence>
<evidence type="ECO:0000305" key="4"/>
<dbReference type="EMBL" id="FO080290">
    <property type="protein sequence ID" value="CCD62651.1"/>
    <property type="molecule type" value="Genomic_DNA"/>
</dbReference>
<dbReference type="PIR" id="S44775">
    <property type="entry name" value="S44775"/>
</dbReference>
<dbReference type="RefSeq" id="NP_001293630.1">
    <property type="nucleotide sequence ID" value="NM_001306701.1"/>
</dbReference>
<dbReference type="RefSeq" id="NP_001370362.1">
    <property type="nucleotide sequence ID" value="NM_001382934.2"/>
</dbReference>
<dbReference type="SMR" id="P34348"/>
<dbReference type="FunCoup" id="P34348">
    <property type="interactions" value="1"/>
</dbReference>
<dbReference type="IntAct" id="P34348">
    <property type="interactions" value="2"/>
</dbReference>
<dbReference type="MINT" id="P34348"/>
<dbReference type="STRING" id="6239.C30A5.2.1"/>
<dbReference type="PaxDb" id="6239-C30A5.2"/>
<dbReference type="EnsemblMetazoa" id="C30A5.2.1">
    <property type="protein sequence ID" value="C30A5.2.1"/>
    <property type="gene ID" value="WBGene00004342"/>
</dbReference>
<dbReference type="EnsemblMetazoa" id="C30A5.2.2">
    <property type="protein sequence ID" value="C30A5.2.2"/>
    <property type="gene ID" value="WBGene00004342"/>
</dbReference>
<dbReference type="GeneID" id="24104262"/>
<dbReference type="AGR" id="WB:WBGene00004342"/>
<dbReference type="WormBase" id="C30A5.2">
    <property type="protein sequence ID" value="CE00094"/>
    <property type="gene ID" value="WBGene00004342"/>
    <property type="gene designation" value="rfs-1"/>
</dbReference>
<dbReference type="eggNOG" id="ENOG502T0IA">
    <property type="taxonomic scope" value="Eukaryota"/>
</dbReference>
<dbReference type="GeneTree" id="ENSGT00940000159095"/>
<dbReference type="HOGENOM" id="CLU_987747_0_0_1"/>
<dbReference type="InParanoid" id="P34348"/>
<dbReference type="OMA" id="NHITHWR"/>
<dbReference type="OrthoDB" id="336321at2759"/>
<dbReference type="PhylomeDB" id="P34348"/>
<dbReference type="PRO" id="PR:P34348"/>
<dbReference type="Proteomes" id="UP000001940">
    <property type="component" value="Chromosome III"/>
</dbReference>
<dbReference type="Bgee" id="WBGene00004342">
    <property type="expression patterns" value="Expressed in pharyngeal muscle cell (C elegans) and 3 other cell types or tissues"/>
</dbReference>
<dbReference type="GO" id="GO:0033061">
    <property type="term" value="C:DNA recombinase mediator complex"/>
    <property type="evidence" value="ECO:0000314"/>
    <property type="project" value="WormBase"/>
</dbReference>
<dbReference type="GO" id="GO:0005815">
    <property type="term" value="C:microtubule organizing center"/>
    <property type="evidence" value="ECO:0000318"/>
    <property type="project" value="GO_Central"/>
</dbReference>
<dbReference type="GO" id="GO:0033063">
    <property type="term" value="C:Rad51B-Rad51C-Rad51D-XRCC2 complex"/>
    <property type="evidence" value="ECO:0000318"/>
    <property type="project" value="GO_Central"/>
</dbReference>
<dbReference type="GO" id="GO:0005657">
    <property type="term" value="C:replication fork"/>
    <property type="evidence" value="ECO:0000318"/>
    <property type="project" value="GO_Central"/>
</dbReference>
<dbReference type="GO" id="GO:0005524">
    <property type="term" value="F:ATP binding"/>
    <property type="evidence" value="ECO:0007669"/>
    <property type="project" value="InterPro"/>
</dbReference>
<dbReference type="GO" id="GO:0008094">
    <property type="term" value="F:ATP-dependent activity, acting on DNA"/>
    <property type="evidence" value="ECO:0000318"/>
    <property type="project" value="GO_Central"/>
</dbReference>
<dbReference type="GO" id="GO:0140664">
    <property type="term" value="F:ATP-dependent DNA damage sensor activity"/>
    <property type="evidence" value="ECO:0007669"/>
    <property type="project" value="InterPro"/>
</dbReference>
<dbReference type="GO" id="GO:0051117">
    <property type="term" value="F:ATPase binding"/>
    <property type="evidence" value="ECO:0000353"/>
    <property type="project" value="WormBase"/>
</dbReference>
<dbReference type="GO" id="GO:0003697">
    <property type="term" value="F:single-stranded DNA binding"/>
    <property type="evidence" value="ECO:0000318"/>
    <property type="project" value="GO_Central"/>
</dbReference>
<dbReference type="GO" id="GO:0000730">
    <property type="term" value="P:DNA recombinase assembly"/>
    <property type="evidence" value="ECO:0000316"/>
    <property type="project" value="CACAO"/>
</dbReference>
<dbReference type="GO" id="GO:0042148">
    <property type="term" value="P:DNA strand invasion"/>
    <property type="evidence" value="ECO:0000318"/>
    <property type="project" value="GO_Central"/>
</dbReference>
<dbReference type="GO" id="GO:0000724">
    <property type="term" value="P:double-strand break repair via homologous recombination"/>
    <property type="evidence" value="ECO:0000318"/>
    <property type="project" value="GO_Central"/>
</dbReference>
<dbReference type="GO" id="GO:0007131">
    <property type="term" value="P:reciprocal meiotic recombination"/>
    <property type="evidence" value="ECO:0000318"/>
    <property type="project" value="GO_Central"/>
</dbReference>
<dbReference type="GO" id="GO:0000712">
    <property type="term" value="P:resolution of meiotic recombination intermediates"/>
    <property type="evidence" value="ECO:0000316"/>
    <property type="project" value="WormBase"/>
</dbReference>
<dbReference type="GO" id="GO:0000723">
    <property type="term" value="P:telomere maintenance"/>
    <property type="evidence" value="ECO:0000318"/>
    <property type="project" value="GO_Central"/>
</dbReference>
<dbReference type="Gene3D" id="3.40.50.300">
    <property type="entry name" value="P-loop containing nucleotide triphosphate hydrolases"/>
    <property type="match status" value="1"/>
</dbReference>
<dbReference type="InterPro" id="IPR051988">
    <property type="entry name" value="HRR_RAD51_Paralog"/>
</dbReference>
<dbReference type="InterPro" id="IPR027417">
    <property type="entry name" value="P-loop_NTPase"/>
</dbReference>
<dbReference type="InterPro" id="IPR020588">
    <property type="entry name" value="RecA_ATP-bd"/>
</dbReference>
<dbReference type="PANTHER" id="PTHR46457">
    <property type="entry name" value="DNA REPAIR PROTEIN RAD51 HOMOLOG 4"/>
    <property type="match status" value="1"/>
</dbReference>
<dbReference type="PANTHER" id="PTHR46457:SF1">
    <property type="entry name" value="DNA REPAIR PROTEIN RAD51 HOMOLOG 4"/>
    <property type="match status" value="1"/>
</dbReference>
<dbReference type="SUPFAM" id="SSF52540">
    <property type="entry name" value="P-loop containing nucleoside triphosphate hydrolases"/>
    <property type="match status" value="1"/>
</dbReference>
<dbReference type="PROSITE" id="PS50162">
    <property type="entry name" value="RECA_2"/>
    <property type="match status" value="1"/>
</dbReference>
<organism>
    <name type="scientific">Caenorhabditis elegans</name>
    <dbReference type="NCBI Taxonomy" id="6239"/>
    <lineage>
        <taxon>Eukaryota</taxon>
        <taxon>Metazoa</taxon>
        <taxon>Ecdysozoa</taxon>
        <taxon>Nematoda</taxon>
        <taxon>Chromadorea</taxon>
        <taxon>Rhabditida</taxon>
        <taxon>Rhabditina</taxon>
        <taxon>Rhabditomorpha</taxon>
        <taxon>Rhabditoidea</taxon>
        <taxon>Rhabditidae</taxon>
        <taxon>Peloderinae</taxon>
        <taxon>Caenorhabditis</taxon>
    </lineage>
</organism>
<keyword id="KW-0227">DNA damage</keyword>
<keyword id="KW-0233">DNA recombination</keyword>
<keyword id="KW-0234">DNA repair</keyword>
<keyword id="KW-0238">DNA-binding</keyword>
<keyword id="KW-0469">Meiosis</keyword>
<keyword id="KW-0539">Nucleus</keyword>
<keyword id="KW-1185">Reference proteome</keyword>